<proteinExistence type="evidence at transcript level"/>
<evidence type="ECO:0000250" key="1"/>
<evidence type="ECO:0000255" key="2"/>
<evidence type="ECO:0000255" key="3">
    <source>
        <dbReference type="PROSITE-ProRule" id="PRU01082"/>
    </source>
</evidence>
<evidence type="ECO:0000269" key="4">
    <source>
    </source>
</evidence>
<evidence type="ECO:0000303" key="5">
    <source>
    </source>
</evidence>
<evidence type="ECO:0000303" key="6">
    <source>
    </source>
</evidence>
<evidence type="ECO:0000305" key="7"/>
<evidence type="ECO:0000312" key="8">
    <source>
        <dbReference type="EMBL" id="BAD29690.1"/>
    </source>
</evidence>
<evidence type="ECO:0000312" key="9">
    <source>
        <dbReference type="EMBL" id="BAS77942.1"/>
    </source>
</evidence>
<comment type="function">
    <text evidence="4">Probable protein phosphatase that may play a role as a mitochondrial signal transduction mediator in pollen germination. May function in retrograde signaling from the mitochondria to the nucleus. May be a downstream factor of cytoplasmic male sterility (CMS). CMS is caused by genetic incompatibility between nuclei and mitochondria within male reproductive organs.</text>
</comment>
<comment type="catalytic activity">
    <reaction>
        <text>O-phospho-L-seryl-[protein] + H2O = L-seryl-[protein] + phosphate</text>
        <dbReference type="Rhea" id="RHEA:20629"/>
        <dbReference type="Rhea" id="RHEA-COMP:9863"/>
        <dbReference type="Rhea" id="RHEA-COMP:11604"/>
        <dbReference type="ChEBI" id="CHEBI:15377"/>
        <dbReference type="ChEBI" id="CHEBI:29999"/>
        <dbReference type="ChEBI" id="CHEBI:43474"/>
        <dbReference type="ChEBI" id="CHEBI:83421"/>
        <dbReference type="EC" id="3.1.3.16"/>
    </reaction>
</comment>
<comment type="catalytic activity">
    <reaction>
        <text>O-phospho-L-threonyl-[protein] + H2O = L-threonyl-[protein] + phosphate</text>
        <dbReference type="Rhea" id="RHEA:47004"/>
        <dbReference type="Rhea" id="RHEA-COMP:11060"/>
        <dbReference type="Rhea" id="RHEA-COMP:11605"/>
        <dbReference type="ChEBI" id="CHEBI:15377"/>
        <dbReference type="ChEBI" id="CHEBI:30013"/>
        <dbReference type="ChEBI" id="CHEBI:43474"/>
        <dbReference type="ChEBI" id="CHEBI:61977"/>
        <dbReference type="EC" id="3.1.3.16"/>
    </reaction>
</comment>
<comment type="cofactor">
    <cofactor evidence="1">
        <name>Mg(2+)</name>
        <dbReference type="ChEBI" id="CHEBI:18420"/>
    </cofactor>
    <cofactor evidence="1">
        <name>Mn(2+)</name>
        <dbReference type="ChEBI" id="CHEBI:29035"/>
    </cofactor>
    <text evidence="1">Binds 2 magnesium or manganese ions per subunit.</text>
</comment>
<comment type="subcellular location">
    <subcellularLocation>
        <location evidence="4">Mitochondrion</location>
    </subcellularLocation>
</comment>
<comment type="tissue specificity">
    <text evidence="4">Highly expressed in mature pollen grains.</text>
</comment>
<comment type="developmental stage">
    <text evidence="4">Expressed in anthers from the bi-cellular to the tri-cellular pollen stage.</text>
</comment>
<comment type="miscellaneous">
    <text evidence="4">Plants silencing PP2C13 exhibit a major loss of seed-set fertility, without visible defect in pollen development. Plants silencing PP2C13 show up-regulation of AOX1A gene which is regulated by mitochondrial retrograde signaling.</text>
</comment>
<comment type="similarity">
    <text evidence="7">Belongs to the PP2C family.</text>
</comment>
<comment type="sequence caution" evidence="7">
    <conflict type="erroneous termination">
        <sequence resource="EMBL" id="AK069289"/>
    </conflict>
    <text>Truncated C-terminus.</text>
</comment>
<protein>
    <recommendedName>
        <fullName evidence="7">Probable protein phosphatase 2C member 13, mitochondrial</fullName>
        <shortName evidence="6">OsPP2C13</shortName>
        <ecNumber evidence="7">3.1.3.16</ecNumber>
    </recommendedName>
    <alternativeName>
        <fullName evidence="5">Protein DOWNREGULATED IN CW-CMS 11</fullName>
    </alternativeName>
</protein>
<accession>Q6EN45</accession>
<accession>A0A0P0VH70</accession>
<sequence length="363" mass="38958">MVCFASLRRALPLLLRATTTTTPRFLLPRALSGGVGGGAAVDARALLRGHSGWRGLRVAARMMLDSSDSAAAAGQMQPQQRAAGAVACSAQDGGAAGYASGGWAREDGKLKCGYSSFRGKRATMEDFYDVKLTEIDGQAVSLFGVFDGHGGPRAAEYLKENLFENLLKHPEFLTDTKLAISETYQKTDTDFLESESNAFRDDGSTASTAVLVGGHLYVANVGDSRAVVSKAGKAMALSEDHKPNRSDERKRIENAGGVVIWAGTWRVGGVLAMSRAFGNRLLKPFVVAEPEIQEELVNEDLECLVLASDGLWDVVENEEAVSLAKTEDLPESVARKLTEIAYSRGSADNITCIVVQFHHDKTE</sequence>
<name>P2C13_ORYSJ</name>
<organism>
    <name type="scientific">Oryza sativa subsp. japonica</name>
    <name type="common">Rice</name>
    <dbReference type="NCBI Taxonomy" id="39947"/>
    <lineage>
        <taxon>Eukaryota</taxon>
        <taxon>Viridiplantae</taxon>
        <taxon>Streptophyta</taxon>
        <taxon>Embryophyta</taxon>
        <taxon>Tracheophyta</taxon>
        <taxon>Spermatophyta</taxon>
        <taxon>Magnoliopsida</taxon>
        <taxon>Liliopsida</taxon>
        <taxon>Poales</taxon>
        <taxon>Poaceae</taxon>
        <taxon>BOP clade</taxon>
        <taxon>Oryzoideae</taxon>
        <taxon>Oryzeae</taxon>
        <taxon>Oryzinae</taxon>
        <taxon>Oryza</taxon>
        <taxon>Oryza sativa</taxon>
    </lineage>
</organism>
<reference key="1">
    <citation type="journal article" date="2005" name="Nature">
        <title>The map-based sequence of the rice genome.</title>
        <authorList>
            <consortium name="International rice genome sequencing project (IRGSP)"/>
        </authorList>
    </citation>
    <scope>NUCLEOTIDE SEQUENCE [LARGE SCALE GENOMIC DNA]</scope>
    <source>
        <strain>cv. Nipponbare</strain>
    </source>
</reference>
<reference key="2">
    <citation type="journal article" date="2008" name="Nucleic Acids Res.">
        <title>The rice annotation project database (RAP-DB): 2008 update.</title>
        <authorList>
            <consortium name="The rice annotation project (RAP)"/>
        </authorList>
    </citation>
    <scope>GENOME REANNOTATION</scope>
    <source>
        <strain>cv. Nipponbare</strain>
    </source>
</reference>
<reference key="3">
    <citation type="journal article" date="2013" name="Rice">
        <title>Improvement of the Oryza sativa Nipponbare reference genome using next generation sequence and optical map data.</title>
        <authorList>
            <person name="Kawahara Y."/>
            <person name="de la Bastide M."/>
            <person name="Hamilton J.P."/>
            <person name="Kanamori H."/>
            <person name="McCombie W.R."/>
            <person name="Ouyang S."/>
            <person name="Schwartz D.C."/>
            <person name="Tanaka T."/>
            <person name="Wu J."/>
            <person name="Zhou S."/>
            <person name="Childs K.L."/>
            <person name="Davidson R.M."/>
            <person name="Lin H."/>
            <person name="Quesada-Ocampo L."/>
            <person name="Vaillancourt B."/>
            <person name="Sakai H."/>
            <person name="Lee S.S."/>
            <person name="Kim J."/>
            <person name="Numa H."/>
            <person name="Itoh T."/>
            <person name="Buell C.R."/>
            <person name="Matsumoto T."/>
        </authorList>
    </citation>
    <scope>GENOME REANNOTATION</scope>
    <source>
        <strain>cv. Nipponbare</strain>
    </source>
</reference>
<reference key="4">
    <citation type="journal article" date="2003" name="Science">
        <title>Collection, mapping, and annotation of over 28,000 cDNA clones from japonica rice.</title>
        <authorList>
            <consortium name="The rice full-length cDNA consortium"/>
        </authorList>
    </citation>
    <scope>NUCLEOTIDE SEQUENCE [LARGE SCALE MRNA]</scope>
    <source>
        <strain>cv. Nipponbare</strain>
    </source>
</reference>
<reference key="5">
    <citation type="journal article" date="2008" name="BMC Genomics">
        <title>Genome-wide and expression analysis of protein phosphatase 2C in rice and Arabidopsis.</title>
        <authorList>
            <person name="Xue T."/>
            <person name="Wang D."/>
            <person name="Zhang S."/>
            <person name="Ehlting J."/>
            <person name="Ni F."/>
            <person name="Jacab S."/>
            <person name="Zheng C."/>
            <person name="Zhong Y."/>
        </authorList>
    </citation>
    <scope>GENE FAMILY</scope>
    <scope>NOMENCLATURE</scope>
</reference>
<reference key="6">
    <citation type="journal article" date="2008" name="Plant Cell Physiol.">
        <title>DCW11, down-regulated gene 11 in CW-type cytoplasmic male sterile rice, encoding mitochondrial protein phosphatase 2c is related to cytoplasmic male sterility.</title>
        <authorList>
            <person name="Fujii S."/>
            <person name="Toriyama K."/>
        </authorList>
    </citation>
    <scope>FUNCTION</scope>
    <scope>SUBCELLULAR LOCATION</scope>
    <scope>TISSUE SPECIFICITY</scope>
    <scope>DEVELOPMENTAL STAGE</scope>
</reference>
<feature type="transit peptide" description="Mitochondrion" evidence="2">
    <location>
        <begin position="1"/>
        <end position="59"/>
    </location>
</feature>
<feature type="chain" id="PRO_0000363259" description="Probable protein phosphatase 2C member 13, mitochondrial">
    <location>
        <begin position="60"/>
        <end position="363"/>
    </location>
</feature>
<feature type="domain" description="PPM-type phosphatase" evidence="3">
    <location>
        <begin position="111"/>
        <end position="357"/>
    </location>
</feature>
<feature type="binding site" evidence="1">
    <location>
        <position position="147"/>
    </location>
    <ligand>
        <name>Mn(2+)</name>
        <dbReference type="ChEBI" id="CHEBI:29035"/>
        <label>1</label>
    </ligand>
</feature>
<feature type="binding site" evidence="1">
    <location>
        <position position="147"/>
    </location>
    <ligand>
        <name>Mn(2+)</name>
        <dbReference type="ChEBI" id="CHEBI:29035"/>
        <label>2</label>
    </ligand>
</feature>
<feature type="binding site" evidence="1">
    <location>
        <position position="148"/>
    </location>
    <ligand>
        <name>Mn(2+)</name>
        <dbReference type="ChEBI" id="CHEBI:29035"/>
        <label>1</label>
    </ligand>
</feature>
<feature type="binding site" evidence="1">
    <location>
        <position position="309"/>
    </location>
    <ligand>
        <name>Mn(2+)</name>
        <dbReference type="ChEBI" id="CHEBI:29035"/>
        <label>2</label>
    </ligand>
</feature>
<feature type="binding site" evidence="1">
    <location>
        <position position="348"/>
    </location>
    <ligand>
        <name>Mn(2+)</name>
        <dbReference type="ChEBI" id="CHEBI:29035"/>
        <label>2</label>
    </ligand>
</feature>
<feature type="sequence conflict" description="In Ref. 4; AK069289." evidence="7" ref="4">
    <location>
        <position position="261"/>
    </location>
</feature>
<dbReference type="EC" id="3.1.3.16" evidence="7"/>
<dbReference type="EMBL" id="AP006844">
    <property type="protein sequence ID" value="BAD29690.1"/>
    <property type="molecule type" value="Genomic_DNA"/>
</dbReference>
<dbReference type="EMBL" id="AP008208">
    <property type="protein sequence ID" value="BAF08375.1"/>
    <property type="molecule type" value="Genomic_DNA"/>
</dbReference>
<dbReference type="EMBL" id="AP014958">
    <property type="protein sequence ID" value="BAS77942.1"/>
    <property type="molecule type" value="Genomic_DNA"/>
</dbReference>
<dbReference type="EMBL" id="AK069289">
    <property type="status" value="NOT_ANNOTATED_CDS"/>
    <property type="molecule type" value="mRNA"/>
</dbReference>
<dbReference type="RefSeq" id="XP_015625481.1">
    <property type="nucleotide sequence ID" value="XM_015769995.1"/>
</dbReference>
<dbReference type="SMR" id="Q6EN45"/>
<dbReference type="FunCoup" id="Q6EN45">
    <property type="interactions" value="277"/>
</dbReference>
<dbReference type="STRING" id="39947.Q6EN45"/>
<dbReference type="PaxDb" id="39947-Q6EN45"/>
<dbReference type="EnsemblPlants" id="Os02t0255100-01">
    <property type="protein sequence ID" value="Os02t0255100-01"/>
    <property type="gene ID" value="Os02g0255100"/>
</dbReference>
<dbReference type="Gramene" id="Os02t0255100-01">
    <property type="protein sequence ID" value="Os02t0255100-01"/>
    <property type="gene ID" value="Os02g0255100"/>
</dbReference>
<dbReference type="KEGG" id="dosa:Os02g0255100"/>
<dbReference type="eggNOG" id="KOG0698">
    <property type="taxonomic scope" value="Eukaryota"/>
</dbReference>
<dbReference type="HOGENOM" id="CLU_013173_0_6_1"/>
<dbReference type="InParanoid" id="Q6EN45"/>
<dbReference type="OMA" id="EMMMTHE"/>
<dbReference type="OrthoDB" id="10264738at2759"/>
<dbReference type="Proteomes" id="UP000000763">
    <property type="component" value="Chromosome 2"/>
</dbReference>
<dbReference type="Proteomes" id="UP000059680">
    <property type="component" value="Chromosome 2"/>
</dbReference>
<dbReference type="ExpressionAtlas" id="Q6EN45">
    <property type="expression patterns" value="baseline and differential"/>
</dbReference>
<dbReference type="GO" id="GO:0005739">
    <property type="term" value="C:mitochondrion"/>
    <property type="evidence" value="ECO:0000314"/>
    <property type="project" value="UniProtKB"/>
</dbReference>
<dbReference type="GO" id="GO:0046872">
    <property type="term" value="F:metal ion binding"/>
    <property type="evidence" value="ECO:0007669"/>
    <property type="project" value="UniProtKB-KW"/>
</dbReference>
<dbReference type="GO" id="GO:0004722">
    <property type="term" value="F:protein serine/threonine phosphatase activity"/>
    <property type="evidence" value="ECO:0007669"/>
    <property type="project" value="UniProtKB-EC"/>
</dbReference>
<dbReference type="GO" id="GO:0009846">
    <property type="term" value="P:pollen germination"/>
    <property type="evidence" value="ECO:0000315"/>
    <property type="project" value="UniProtKB"/>
</dbReference>
<dbReference type="GO" id="GO:0007165">
    <property type="term" value="P:signal transduction"/>
    <property type="evidence" value="ECO:0000318"/>
    <property type="project" value="GO_Central"/>
</dbReference>
<dbReference type="CDD" id="cd00143">
    <property type="entry name" value="PP2Cc"/>
    <property type="match status" value="1"/>
</dbReference>
<dbReference type="FunFam" id="3.60.40.10:FF:000027">
    <property type="entry name" value="Probable protein phosphatase 2C 76"/>
    <property type="match status" value="1"/>
</dbReference>
<dbReference type="Gene3D" id="3.60.40.10">
    <property type="entry name" value="PPM-type phosphatase domain"/>
    <property type="match status" value="1"/>
</dbReference>
<dbReference type="InterPro" id="IPR015655">
    <property type="entry name" value="PP2C"/>
</dbReference>
<dbReference type="InterPro" id="IPR000222">
    <property type="entry name" value="PP2C_BS"/>
</dbReference>
<dbReference type="InterPro" id="IPR036457">
    <property type="entry name" value="PPM-type-like_dom_sf"/>
</dbReference>
<dbReference type="InterPro" id="IPR001932">
    <property type="entry name" value="PPM-type_phosphatase-like_dom"/>
</dbReference>
<dbReference type="PANTHER" id="PTHR47992">
    <property type="entry name" value="PROTEIN PHOSPHATASE"/>
    <property type="match status" value="1"/>
</dbReference>
<dbReference type="Pfam" id="PF00481">
    <property type="entry name" value="PP2C"/>
    <property type="match status" value="1"/>
</dbReference>
<dbReference type="SMART" id="SM00331">
    <property type="entry name" value="PP2C_SIG"/>
    <property type="match status" value="1"/>
</dbReference>
<dbReference type="SMART" id="SM00332">
    <property type="entry name" value="PP2Cc"/>
    <property type="match status" value="1"/>
</dbReference>
<dbReference type="SUPFAM" id="SSF81606">
    <property type="entry name" value="PP2C-like"/>
    <property type="match status" value="1"/>
</dbReference>
<dbReference type="PROSITE" id="PS01032">
    <property type="entry name" value="PPM_1"/>
    <property type="match status" value="1"/>
</dbReference>
<dbReference type="PROSITE" id="PS51746">
    <property type="entry name" value="PPM_2"/>
    <property type="match status" value="1"/>
</dbReference>
<keyword id="KW-0378">Hydrolase</keyword>
<keyword id="KW-0460">Magnesium</keyword>
<keyword id="KW-0464">Manganese</keyword>
<keyword id="KW-0479">Metal-binding</keyword>
<keyword id="KW-0496">Mitochondrion</keyword>
<keyword id="KW-0904">Protein phosphatase</keyword>
<keyword id="KW-1185">Reference proteome</keyword>
<keyword id="KW-0809">Transit peptide</keyword>
<gene>
    <name evidence="6" type="primary">PP2C13</name>
    <name evidence="5" type="synonym">DCW11</name>
    <name evidence="9" type="ordered locus">Os02g0255100</name>
    <name evidence="7" type="ordered locus">LOC_Os02g15594</name>
    <name evidence="8" type="ORF">OSJNBa0052K15.14</name>
</gene>